<protein>
    <recommendedName>
        <fullName evidence="1">DNA primase</fullName>
        <ecNumber evidence="1">2.7.7.101</ecNumber>
    </recommendedName>
</protein>
<reference key="1">
    <citation type="journal article" date="1998" name="Science">
        <title>Complete genome sequence of Treponema pallidum, the syphilis spirochete.</title>
        <authorList>
            <person name="Fraser C.M."/>
            <person name="Norris S.J."/>
            <person name="Weinstock G.M."/>
            <person name="White O."/>
            <person name="Sutton G.G."/>
            <person name="Dodson R.J."/>
            <person name="Gwinn M.L."/>
            <person name="Hickey E.K."/>
            <person name="Clayton R.A."/>
            <person name="Ketchum K.A."/>
            <person name="Sodergren E."/>
            <person name="Hardham J.M."/>
            <person name="McLeod M.P."/>
            <person name="Salzberg S.L."/>
            <person name="Peterson J.D."/>
            <person name="Khalak H.G."/>
            <person name="Richardson D.L."/>
            <person name="Howell J.K."/>
            <person name="Chidambaram M."/>
            <person name="Utterback T.R."/>
            <person name="McDonald L.A."/>
            <person name="Artiach P."/>
            <person name="Bowman C."/>
            <person name="Cotton M.D."/>
            <person name="Fujii C."/>
            <person name="Garland S.A."/>
            <person name="Hatch B."/>
            <person name="Horst K."/>
            <person name="Roberts K.M."/>
            <person name="Sandusky M."/>
            <person name="Weidman J.F."/>
            <person name="Smith H.O."/>
            <person name="Venter J.C."/>
        </authorList>
    </citation>
    <scope>NUCLEOTIDE SEQUENCE [LARGE SCALE GENOMIC DNA]</scope>
    <source>
        <strain>Nichols</strain>
    </source>
</reference>
<evidence type="ECO:0000255" key="1">
    <source>
        <dbReference type="HAMAP-Rule" id="MF_00974"/>
    </source>
</evidence>
<feature type="chain" id="PRO_0000180531" description="DNA primase">
    <location>
        <begin position="1"/>
        <end position="605"/>
    </location>
</feature>
<feature type="domain" description="Toprim" evidence="1">
    <location>
        <begin position="257"/>
        <end position="338"/>
    </location>
</feature>
<feature type="zinc finger region" description="CHC2-type" evidence="1">
    <location>
        <begin position="39"/>
        <end position="63"/>
    </location>
</feature>
<feature type="binding site" evidence="1">
    <location>
        <position position="263"/>
    </location>
    <ligand>
        <name>Mg(2+)</name>
        <dbReference type="ChEBI" id="CHEBI:18420"/>
        <label>1</label>
        <note>catalytic</note>
    </ligand>
</feature>
<feature type="binding site" evidence="1">
    <location>
        <position position="307"/>
    </location>
    <ligand>
        <name>Mg(2+)</name>
        <dbReference type="ChEBI" id="CHEBI:18420"/>
        <label>1</label>
        <note>catalytic</note>
    </ligand>
</feature>
<feature type="binding site" evidence="1">
    <location>
        <position position="307"/>
    </location>
    <ligand>
        <name>Mg(2+)</name>
        <dbReference type="ChEBI" id="CHEBI:18420"/>
        <label>2</label>
    </ligand>
</feature>
<feature type="binding site" evidence="1">
    <location>
        <position position="309"/>
    </location>
    <ligand>
        <name>Mg(2+)</name>
        <dbReference type="ChEBI" id="CHEBI:18420"/>
        <label>2</label>
    </ligand>
</feature>
<keyword id="KW-0235">DNA replication</keyword>
<keyword id="KW-0238">DNA-binding</keyword>
<keyword id="KW-0240">DNA-directed RNA polymerase</keyword>
<keyword id="KW-0460">Magnesium</keyword>
<keyword id="KW-0479">Metal-binding</keyword>
<keyword id="KW-0548">Nucleotidyltransferase</keyword>
<keyword id="KW-0639">Primosome</keyword>
<keyword id="KW-1185">Reference proteome</keyword>
<keyword id="KW-0804">Transcription</keyword>
<keyword id="KW-0808">Transferase</keyword>
<keyword id="KW-0862">Zinc</keyword>
<keyword id="KW-0863">Zinc-finger</keyword>
<name>DNAG_TREPA</name>
<gene>
    <name evidence="1" type="primary">dnaG</name>
    <name type="ordered locus">TP_0492</name>
</gene>
<organism>
    <name type="scientific">Treponema pallidum (strain Nichols)</name>
    <dbReference type="NCBI Taxonomy" id="243276"/>
    <lineage>
        <taxon>Bacteria</taxon>
        <taxon>Pseudomonadati</taxon>
        <taxon>Spirochaetota</taxon>
        <taxon>Spirochaetia</taxon>
        <taxon>Spirochaetales</taxon>
        <taxon>Treponemataceae</taxon>
        <taxon>Treponema</taxon>
    </lineage>
</organism>
<accession>O83505</accession>
<proteinExistence type="inferred from homology"/>
<comment type="function">
    <text evidence="1">RNA polymerase that catalyzes the synthesis of short RNA molecules used as primers for DNA polymerase during DNA replication.</text>
</comment>
<comment type="catalytic activity">
    <reaction evidence="1">
        <text>ssDNA + n NTP = ssDNA/pppN(pN)n-1 hybrid + (n-1) diphosphate.</text>
        <dbReference type="EC" id="2.7.7.101"/>
    </reaction>
</comment>
<comment type="cofactor">
    <cofactor evidence="1">
        <name>Zn(2+)</name>
        <dbReference type="ChEBI" id="CHEBI:29105"/>
    </cofactor>
    <text evidence="1">Binds 1 zinc ion per monomer.</text>
</comment>
<comment type="cofactor">
    <cofactor evidence="1">
        <name>Mg(2+)</name>
        <dbReference type="ChEBI" id="CHEBI:18420"/>
    </cofactor>
    <text evidence="1">Binds two Mg(2+) per subunit.</text>
</comment>
<comment type="subunit">
    <text evidence="1">Monomer. Interacts with DnaB.</text>
</comment>
<comment type="domain">
    <text evidence="1">Contains an N-terminal zinc-binding domain, a central core domain that contains the primase activity, and a C-terminal DnaB-binding domain.</text>
</comment>
<comment type="similarity">
    <text evidence="1">Belongs to the DnaG primase family.</text>
</comment>
<sequence>MARISAHVIDAIADRVDLVSLVGNYTHLERRGDDWWGRCPFHHERTPSFHVVPDKKMYYCFGCGVGGSTIKFFMEIEKIDFHEAAVRLAKRAGIEMSFEDGVHAPSAHASFTMQLCEVYQRIAETFHHVLMHTAQGARARAYLASRKVTDDSIRTFKLGYAPPDPVWLFQFLRHKGYSPEFLARSGLFAKKSERIAVFSDRIMYPIADRYGQVIAFGARALGTAPAKYLNTADMPQYKKGEHLFAFHCALSQMRKTRAAIICEGYMDVIAFHQAQLTYAVAPLGALLTKSQARLMRSFVDRIYMCFDADGAGRAATYKAILLCRSLGFEVRIVELNGGTDPAECACIEGEDALRKSVERSTTDAQYLIRCARHEHSHLGADDTSRAVSFLFPYLSVLDSAIQREQVMQDIAMAFGIRIQAVHADYLRYVSRTTQKGTTGNCVLSVQGTAIQVKEPATGVRTAQLRLVLAVVANPELFELLRESVCADDFEDPMAKELFIILEECYRADTRASPHVLSCCTTDELRKLVSEAIVCGEFSCNAPQIVRDGVALVRRNRLLKERESLVGRLRRFGDASSGEECGSMQELMMEKQRVDEELERLKGVRK</sequence>
<dbReference type="EC" id="2.7.7.101" evidence="1"/>
<dbReference type="EMBL" id="AE000520">
    <property type="protein sequence ID" value="AAC65479.1"/>
    <property type="molecule type" value="Genomic_DNA"/>
</dbReference>
<dbReference type="PIR" id="D71318">
    <property type="entry name" value="D71318"/>
</dbReference>
<dbReference type="RefSeq" id="WP_010881941.1">
    <property type="nucleotide sequence ID" value="NC_021490.2"/>
</dbReference>
<dbReference type="SMR" id="O83505"/>
<dbReference type="IntAct" id="O83505">
    <property type="interactions" value="31"/>
</dbReference>
<dbReference type="STRING" id="243276.TP_0492"/>
<dbReference type="EnsemblBacteria" id="AAC65479">
    <property type="protein sequence ID" value="AAC65479"/>
    <property type="gene ID" value="TP_0492"/>
</dbReference>
<dbReference type="GeneID" id="93876260"/>
<dbReference type="KEGG" id="tpa:TP_0492"/>
<dbReference type="KEGG" id="tpw:TPANIC_0492"/>
<dbReference type="eggNOG" id="COG0358">
    <property type="taxonomic scope" value="Bacteria"/>
</dbReference>
<dbReference type="HOGENOM" id="CLU_013501_3_3_12"/>
<dbReference type="OrthoDB" id="9803773at2"/>
<dbReference type="Proteomes" id="UP000000811">
    <property type="component" value="Chromosome"/>
</dbReference>
<dbReference type="GO" id="GO:0005737">
    <property type="term" value="C:cytoplasm"/>
    <property type="evidence" value="ECO:0007669"/>
    <property type="project" value="TreeGrafter"/>
</dbReference>
<dbReference type="GO" id="GO:0000428">
    <property type="term" value="C:DNA-directed RNA polymerase complex"/>
    <property type="evidence" value="ECO:0007669"/>
    <property type="project" value="UniProtKB-KW"/>
</dbReference>
<dbReference type="GO" id="GO:1990077">
    <property type="term" value="C:primosome complex"/>
    <property type="evidence" value="ECO:0007669"/>
    <property type="project" value="UniProtKB-KW"/>
</dbReference>
<dbReference type="GO" id="GO:0003677">
    <property type="term" value="F:DNA binding"/>
    <property type="evidence" value="ECO:0007669"/>
    <property type="project" value="UniProtKB-KW"/>
</dbReference>
<dbReference type="GO" id="GO:0003899">
    <property type="term" value="F:DNA-directed RNA polymerase activity"/>
    <property type="evidence" value="ECO:0007669"/>
    <property type="project" value="InterPro"/>
</dbReference>
<dbReference type="GO" id="GO:0008270">
    <property type="term" value="F:zinc ion binding"/>
    <property type="evidence" value="ECO:0007669"/>
    <property type="project" value="UniProtKB-UniRule"/>
</dbReference>
<dbReference type="GO" id="GO:0006269">
    <property type="term" value="P:DNA replication, synthesis of primer"/>
    <property type="evidence" value="ECO:0007669"/>
    <property type="project" value="UniProtKB-UniRule"/>
</dbReference>
<dbReference type="CDD" id="cd03364">
    <property type="entry name" value="TOPRIM_DnaG_primases"/>
    <property type="match status" value="1"/>
</dbReference>
<dbReference type="FunFam" id="3.90.580.10:FF:000001">
    <property type="entry name" value="DNA primase"/>
    <property type="match status" value="1"/>
</dbReference>
<dbReference type="Gene3D" id="3.40.1360.10">
    <property type="match status" value="1"/>
</dbReference>
<dbReference type="Gene3D" id="3.90.980.10">
    <property type="entry name" value="DNA primase, catalytic core, N-terminal domain"/>
    <property type="match status" value="1"/>
</dbReference>
<dbReference type="Gene3D" id="3.90.580.10">
    <property type="entry name" value="Zinc finger, CHC2-type domain"/>
    <property type="match status" value="1"/>
</dbReference>
<dbReference type="HAMAP" id="MF_00974">
    <property type="entry name" value="DNA_primase_DnaG"/>
    <property type="match status" value="1"/>
</dbReference>
<dbReference type="InterPro" id="IPR037068">
    <property type="entry name" value="DNA_primase_core_N_sf"/>
</dbReference>
<dbReference type="InterPro" id="IPR006295">
    <property type="entry name" value="DNA_primase_DnaG"/>
</dbReference>
<dbReference type="InterPro" id="IPR036977">
    <property type="entry name" value="DNA_primase_Znf_CHC2"/>
</dbReference>
<dbReference type="InterPro" id="IPR030846">
    <property type="entry name" value="DnaG_bac"/>
</dbReference>
<dbReference type="InterPro" id="IPR013264">
    <property type="entry name" value="DNAG_N"/>
</dbReference>
<dbReference type="InterPro" id="IPR050219">
    <property type="entry name" value="DnaG_primase"/>
</dbReference>
<dbReference type="InterPro" id="IPR034151">
    <property type="entry name" value="TOPRIM_DnaG_bac"/>
</dbReference>
<dbReference type="InterPro" id="IPR006171">
    <property type="entry name" value="TOPRIM_dom"/>
</dbReference>
<dbReference type="InterPro" id="IPR002694">
    <property type="entry name" value="Znf_CHC2"/>
</dbReference>
<dbReference type="NCBIfam" id="TIGR01391">
    <property type="entry name" value="dnaG"/>
    <property type="match status" value="1"/>
</dbReference>
<dbReference type="PANTHER" id="PTHR30313">
    <property type="entry name" value="DNA PRIMASE"/>
    <property type="match status" value="1"/>
</dbReference>
<dbReference type="PANTHER" id="PTHR30313:SF2">
    <property type="entry name" value="DNA PRIMASE"/>
    <property type="match status" value="1"/>
</dbReference>
<dbReference type="Pfam" id="PF08275">
    <property type="entry name" value="DNAG_N"/>
    <property type="match status" value="1"/>
</dbReference>
<dbReference type="Pfam" id="PF13155">
    <property type="entry name" value="Toprim_2"/>
    <property type="match status" value="1"/>
</dbReference>
<dbReference type="Pfam" id="PF01807">
    <property type="entry name" value="Zn_ribbon_DnaG"/>
    <property type="match status" value="1"/>
</dbReference>
<dbReference type="PIRSF" id="PIRSF002811">
    <property type="entry name" value="DnaG"/>
    <property type="match status" value="1"/>
</dbReference>
<dbReference type="SMART" id="SM00493">
    <property type="entry name" value="TOPRIM"/>
    <property type="match status" value="1"/>
</dbReference>
<dbReference type="SMART" id="SM00400">
    <property type="entry name" value="ZnF_CHCC"/>
    <property type="match status" value="1"/>
</dbReference>
<dbReference type="SUPFAM" id="SSF56731">
    <property type="entry name" value="DNA primase core"/>
    <property type="match status" value="1"/>
</dbReference>
<dbReference type="SUPFAM" id="SSF57783">
    <property type="entry name" value="Zinc beta-ribbon"/>
    <property type="match status" value="1"/>
</dbReference>
<dbReference type="PROSITE" id="PS50880">
    <property type="entry name" value="TOPRIM"/>
    <property type="match status" value="1"/>
</dbReference>